<protein>
    <recommendedName>
        <fullName evidence="1">4-diphosphocytidyl-2-C-methyl-D-erythritol kinase</fullName>
        <shortName evidence="1">CMK</shortName>
        <ecNumber evidence="1">2.7.1.148</ecNumber>
    </recommendedName>
    <alternativeName>
        <fullName evidence="1">4-(cytidine-5'-diphospho)-2-C-methyl-D-erythritol kinase</fullName>
    </alternativeName>
</protein>
<reference key="1">
    <citation type="journal article" date="2006" name="J. Bacteriol.">
        <title>Comparative genomic evidence for a close relationship between the dimorphic prosthecate bacteria Hyphomonas neptunium and Caulobacter crescentus.</title>
        <authorList>
            <person name="Badger J.H."/>
            <person name="Hoover T.R."/>
            <person name="Brun Y.V."/>
            <person name="Weiner R.M."/>
            <person name="Laub M.T."/>
            <person name="Alexandre G."/>
            <person name="Mrazek J."/>
            <person name="Ren Q."/>
            <person name="Paulsen I.T."/>
            <person name="Nelson K.E."/>
            <person name="Khouri H.M."/>
            <person name="Radune D."/>
            <person name="Sosa J."/>
            <person name="Dodson R.J."/>
            <person name="Sullivan S.A."/>
            <person name="Rosovitz M.J."/>
            <person name="Madupu R."/>
            <person name="Brinkac L.M."/>
            <person name="Durkin A.S."/>
            <person name="Daugherty S.C."/>
            <person name="Kothari S.P."/>
            <person name="Giglio M.G."/>
            <person name="Zhou L."/>
            <person name="Haft D.H."/>
            <person name="Selengut J.D."/>
            <person name="Davidsen T.M."/>
            <person name="Yang Q."/>
            <person name="Zafar N."/>
            <person name="Ward N.L."/>
        </authorList>
    </citation>
    <scope>NUCLEOTIDE SEQUENCE [LARGE SCALE GENOMIC DNA]</scope>
    <source>
        <strain>ATCC 15444</strain>
    </source>
</reference>
<sequence length="298" mass="30215">MSTADKSLSGWAPAKVNLYLHVGPPKPNGRHDLESLVMFSGSGAADHLTAEPAEGLSLSVAGPFAAAAGAGDDNLVLQAARALQAASGTQQGARLSLKKWLPVAAGIGGGSSDAATALRLLTKLWALDPNHAIALAPGLGGDVPVALAGQPSLMRGEGERVTPLPALPPVYAVLVNPGVPCPTGPVFRDHDAAGGGAGFAEIDPPPEFSGPKAFAAWLGQQRNDLESPAIARVPEIGAVLEFLRAQPGVLLARMSGSGATCFALCEALAFAERATAVIAHDAHKAHWWTAASRLGAAP</sequence>
<evidence type="ECO:0000255" key="1">
    <source>
        <dbReference type="HAMAP-Rule" id="MF_00061"/>
    </source>
</evidence>
<organism>
    <name type="scientific">Hyphomonas neptunium (strain ATCC 15444)</name>
    <dbReference type="NCBI Taxonomy" id="228405"/>
    <lineage>
        <taxon>Bacteria</taxon>
        <taxon>Pseudomonadati</taxon>
        <taxon>Pseudomonadota</taxon>
        <taxon>Alphaproteobacteria</taxon>
        <taxon>Hyphomonadales</taxon>
        <taxon>Hyphomonadaceae</taxon>
        <taxon>Hyphomonas</taxon>
    </lineage>
</organism>
<comment type="function">
    <text evidence="1">Catalyzes the phosphorylation of the position 2 hydroxy group of 4-diphosphocytidyl-2C-methyl-D-erythritol.</text>
</comment>
<comment type="catalytic activity">
    <reaction evidence="1">
        <text>4-CDP-2-C-methyl-D-erythritol + ATP = 4-CDP-2-C-methyl-D-erythritol 2-phosphate + ADP + H(+)</text>
        <dbReference type="Rhea" id="RHEA:18437"/>
        <dbReference type="ChEBI" id="CHEBI:15378"/>
        <dbReference type="ChEBI" id="CHEBI:30616"/>
        <dbReference type="ChEBI" id="CHEBI:57823"/>
        <dbReference type="ChEBI" id="CHEBI:57919"/>
        <dbReference type="ChEBI" id="CHEBI:456216"/>
        <dbReference type="EC" id="2.7.1.148"/>
    </reaction>
</comment>
<comment type="pathway">
    <text evidence="1">Isoprenoid biosynthesis; isopentenyl diphosphate biosynthesis via DXP pathway; isopentenyl diphosphate from 1-deoxy-D-xylulose 5-phosphate: step 3/6.</text>
</comment>
<comment type="similarity">
    <text evidence="1">Belongs to the GHMP kinase family. IspE subfamily.</text>
</comment>
<dbReference type="EC" id="2.7.1.148" evidence="1"/>
<dbReference type="EMBL" id="CP000158">
    <property type="protein sequence ID" value="ABI76728.1"/>
    <property type="molecule type" value="Genomic_DNA"/>
</dbReference>
<dbReference type="RefSeq" id="WP_011645705.1">
    <property type="nucleotide sequence ID" value="NC_008358.1"/>
</dbReference>
<dbReference type="SMR" id="Q0C4D8"/>
<dbReference type="STRING" id="228405.HNE_0676"/>
<dbReference type="KEGG" id="hne:HNE_0676"/>
<dbReference type="eggNOG" id="COG1947">
    <property type="taxonomic scope" value="Bacteria"/>
</dbReference>
<dbReference type="HOGENOM" id="CLU_053057_1_0_5"/>
<dbReference type="UniPathway" id="UPA00056">
    <property type="reaction ID" value="UER00094"/>
</dbReference>
<dbReference type="Proteomes" id="UP000001959">
    <property type="component" value="Chromosome"/>
</dbReference>
<dbReference type="GO" id="GO:0050515">
    <property type="term" value="F:4-(cytidine 5'-diphospho)-2-C-methyl-D-erythritol kinase activity"/>
    <property type="evidence" value="ECO:0007669"/>
    <property type="project" value="UniProtKB-UniRule"/>
</dbReference>
<dbReference type="GO" id="GO:0005524">
    <property type="term" value="F:ATP binding"/>
    <property type="evidence" value="ECO:0007669"/>
    <property type="project" value="UniProtKB-UniRule"/>
</dbReference>
<dbReference type="GO" id="GO:0019288">
    <property type="term" value="P:isopentenyl diphosphate biosynthetic process, methylerythritol 4-phosphate pathway"/>
    <property type="evidence" value="ECO:0007669"/>
    <property type="project" value="UniProtKB-UniRule"/>
</dbReference>
<dbReference type="GO" id="GO:0016114">
    <property type="term" value="P:terpenoid biosynthetic process"/>
    <property type="evidence" value="ECO:0007669"/>
    <property type="project" value="InterPro"/>
</dbReference>
<dbReference type="Gene3D" id="3.30.230.10">
    <property type="match status" value="1"/>
</dbReference>
<dbReference type="Gene3D" id="3.30.70.890">
    <property type="entry name" value="GHMP kinase, C-terminal domain"/>
    <property type="match status" value="1"/>
</dbReference>
<dbReference type="HAMAP" id="MF_00061">
    <property type="entry name" value="IspE"/>
    <property type="match status" value="1"/>
</dbReference>
<dbReference type="InterPro" id="IPR013750">
    <property type="entry name" value="GHMP_kinase_C_dom"/>
</dbReference>
<dbReference type="InterPro" id="IPR036554">
    <property type="entry name" value="GHMP_kinase_C_sf"/>
</dbReference>
<dbReference type="InterPro" id="IPR006204">
    <property type="entry name" value="GHMP_kinase_N_dom"/>
</dbReference>
<dbReference type="InterPro" id="IPR004424">
    <property type="entry name" value="IspE"/>
</dbReference>
<dbReference type="InterPro" id="IPR020568">
    <property type="entry name" value="Ribosomal_Su5_D2-typ_SF"/>
</dbReference>
<dbReference type="InterPro" id="IPR014721">
    <property type="entry name" value="Ribsml_uS5_D2-typ_fold_subgr"/>
</dbReference>
<dbReference type="NCBIfam" id="NF011202">
    <property type="entry name" value="PRK14608.1"/>
    <property type="match status" value="1"/>
</dbReference>
<dbReference type="PANTHER" id="PTHR43527">
    <property type="entry name" value="4-DIPHOSPHOCYTIDYL-2-C-METHYL-D-ERYTHRITOL KINASE, CHLOROPLASTIC"/>
    <property type="match status" value="1"/>
</dbReference>
<dbReference type="PANTHER" id="PTHR43527:SF2">
    <property type="entry name" value="4-DIPHOSPHOCYTIDYL-2-C-METHYL-D-ERYTHRITOL KINASE, CHLOROPLASTIC"/>
    <property type="match status" value="1"/>
</dbReference>
<dbReference type="Pfam" id="PF08544">
    <property type="entry name" value="GHMP_kinases_C"/>
    <property type="match status" value="1"/>
</dbReference>
<dbReference type="Pfam" id="PF00288">
    <property type="entry name" value="GHMP_kinases_N"/>
    <property type="match status" value="1"/>
</dbReference>
<dbReference type="PIRSF" id="PIRSF010376">
    <property type="entry name" value="IspE"/>
    <property type="match status" value="1"/>
</dbReference>
<dbReference type="SUPFAM" id="SSF55060">
    <property type="entry name" value="GHMP Kinase, C-terminal domain"/>
    <property type="match status" value="1"/>
</dbReference>
<dbReference type="SUPFAM" id="SSF54211">
    <property type="entry name" value="Ribosomal protein S5 domain 2-like"/>
    <property type="match status" value="1"/>
</dbReference>
<feature type="chain" id="PRO_0000335718" description="4-diphosphocytidyl-2-C-methyl-D-erythritol kinase">
    <location>
        <begin position="1"/>
        <end position="298"/>
    </location>
</feature>
<feature type="active site" evidence="1">
    <location>
        <position position="15"/>
    </location>
</feature>
<feature type="active site" evidence="1">
    <location>
        <position position="142"/>
    </location>
</feature>
<feature type="binding site" evidence="1">
    <location>
        <begin position="102"/>
        <end position="112"/>
    </location>
    <ligand>
        <name>ATP</name>
        <dbReference type="ChEBI" id="CHEBI:30616"/>
    </ligand>
</feature>
<proteinExistence type="inferred from homology"/>
<name>ISPE_HYPNA</name>
<accession>Q0C4D8</accession>
<keyword id="KW-0067">ATP-binding</keyword>
<keyword id="KW-0414">Isoprene biosynthesis</keyword>
<keyword id="KW-0418">Kinase</keyword>
<keyword id="KW-0547">Nucleotide-binding</keyword>
<keyword id="KW-1185">Reference proteome</keyword>
<keyword id="KW-0808">Transferase</keyword>
<gene>
    <name evidence="1" type="primary">ispE</name>
    <name type="ordered locus">HNE_0676</name>
</gene>